<dbReference type="EC" id="2.7.2.3" evidence="1"/>
<dbReference type="EMBL" id="CP000479">
    <property type="protein sequence ID" value="ABK68540.1"/>
    <property type="molecule type" value="Genomic_DNA"/>
</dbReference>
<dbReference type="RefSeq" id="WP_003877645.1">
    <property type="nucleotide sequence ID" value="NC_008595.1"/>
</dbReference>
<dbReference type="PDB" id="7LA1">
    <property type="method" value="X-ray"/>
    <property type="resolution" value="1.60 A"/>
    <property type="chains" value="A/B/C/D=2-415"/>
</dbReference>
<dbReference type="PDBsum" id="7LA1"/>
<dbReference type="SMR" id="A0QHY4"/>
<dbReference type="KEGG" id="mav:MAV_3340"/>
<dbReference type="HOGENOM" id="CLU_025427_0_2_11"/>
<dbReference type="UniPathway" id="UPA00109">
    <property type="reaction ID" value="UER00185"/>
</dbReference>
<dbReference type="Proteomes" id="UP000001574">
    <property type="component" value="Chromosome"/>
</dbReference>
<dbReference type="GO" id="GO:0005829">
    <property type="term" value="C:cytosol"/>
    <property type="evidence" value="ECO:0007669"/>
    <property type="project" value="TreeGrafter"/>
</dbReference>
<dbReference type="GO" id="GO:0043531">
    <property type="term" value="F:ADP binding"/>
    <property type="evidence" value="ECO:0007669"/>
    <property type="project" value="TreeGrafter"/>
</dbReference>
<dbReference type="GO" id="GO:0005524">
    <property type="term" value="F:ATP binding"/>
    <property type="evidence" value="ECO:0007669"/>
    <property type="project" value="UniProtKB-KW"/>
</dbReference>
<dbReference type="GO" id="GO:0004618">
    <property type="term" value="F:phosphoglycerate kinase activity"/>
    <property type="evidence" value="ECO:0007669"/>
    <property type="project" value="UniProtKB-UniRule"/>
</dbReference>
<dbReference type="GO" id="GO:0006094">
    <property type="term" value="P:gluconeogenesis"/>
    <property type="evidence" value="ECO:0007669"/>
    <property type="project" value="TreeGrafter"/>
</dbReference>
<dbReference type="GO" id="GO:0006096">
    <property type="term" value="P:glycolytic process"/>
    <property type="evidence" value="ECO:0007669"/>
    <property type="project" value="UniProtKB-UniRule"/>
</dbReference>
<dbReference type="CDD" id="cd00318">
    <property type="entry name" value="Phosphoglycerate_kinase"/>
    <property type="match status" value="1"/>
</dbReference>
<dbReference type="FunFam" id="3.40.50.1260:FF:000006">
    <property type="entry name" value="Phosphoglycerate kinase"/>
    <property type="match status" value="1"/>
</dbReference>
<dbReference type="FunFam" id="3.40.50.1260:FF:000031">
    <property type="entry name" value="Phosphoglycerate kinase 1"/>
    <property type="match status" value="1"/>
</dbReference>
<dbReference type="Gene3D" id="3.40.50.1260">
    <property type="entry name" value="Phosphoglycerate kinase, N-terminal domain"/>
    <property type="match status" value="2"/>
</dbReference>
<dbReference type="HAMAP" id="MF_00145">
    <property type="entry name" value="Phosphoglyc_kinase"/>
    <property type="match status" value="1"/>
</dbReference>
<dbReference type="InterPro" id="IPR001576">
    <property type="entry name" value="Phosphoglycerate_kinase"/>
</dbReference>
<dbReference type="InterPro" id="IPR015911">
    <property type="entry name" value="Phosphoglycerate_kinase_CS"/>
</dbReference>
<dbReference type="InterPro" id="IPR015824">
    <property type="entry name" value="Phosphoglycerate_kinase_N"/>
</dbReference>
<dbReference type="InterPro" id="IPR036043">
    <property type="entry name" value="Phosphoglycerate_kinase_sf"/>
</dbReference>
<dbReference type="PANTHER" id="PTHR11406">
    <property type="entry name" value="PHOSPHOGLYCERATE KINASE"/>
    <property type="match status" value="1"/>
</dbReference>
<dbReference type="PANTHER" id="PTHR11406:SF23">
    <property type="entry name" value="PHOSPHOGLYCERATE KINASE 1, CHLOROPLASTIC-RELATED"/>
    <property type="match status" value="1"/>
</dbReference>
<dbReference type="Pfam" id="PF00162">
    <property type="entry name" value="PGK"/>
    <property type="match status" value="1"/>
</dbReference>
<dbReference type="PIRSF" id="PIRSF000724">
    <property type="entry name" value="Pgk"/>
    <property type="match status" value="1"/>
</dbReference>
<dbReference type="PRINTS" id="PR00477">
    <property type="entry name" value="PHGLYCKINASE"/>
</dbReference>
<dbReference type="SUPFAM" id="SSF53748">
    <property type="entry name" value="Phosphoglycerate kinase"/>
    <property type="match status" value="1"/>
</dbReference>
<dbReference type="PROSITE" id="PS00111">
    <property type="entry name" value="PGLYCERATE_KINASE"/>
    <property type="match status" value="1"/>
</dbReference>
<feature type="chain" id="PRO_1000009629" description="Phosphoglycerate kinase">
    <location>
        <begin position="1"/>
        <end position="415"/>
    </location>
</feature>
<feature type="binding site" evidence="1">
    <location>
        <begin position="24"/>
        <end position="26"/>
    </location>
    <ligand>
        <name>substrate</name>
    </ligand>
</feature>
<feature type="binding site" evidence="1">
    <location>
        <position position="43"/>
    </location>
    <ligand>
        <name>substrate</name>
    </ligand>
</feature>
<feature type="binding site" evidence="1">
    <location>
        <begin position="66"/>
        <end position="69"/>
    </location>
    <ligand>
        <name>substrate</name>
    </ligand>
</feature>
<feature type="binding site" evidence="1">
    <location>
        <position position="125"/>
    </location>
    <ligand>
        <name>substrate</name>
    </ligand>
</feature>
<feature type="binding site" evidence="1">
    <location>
        <position position="165"/>
    </location>
    <ligand>
        <name>substrate</name>
    </ligand>
</feature>
<feature type="binding site" evidence="1">
    <location>
        <position position="215"/>
    </location>
    <ligand>
        <name>ATP</name>
        <dbReference type="ChEBI" id="CHEBI:30616"/>
    </ligand>
</feature>
<feature type="binding site" evidence="1">
    <location>
        <position position="303"/>
    </location>
    <ligand>
        <name>ATP</name>
        <dbReference type="ChEBI" id="CHEBI:30616"/>
    </ligand>
</feature>
<feature type="binding site" evidence="1">
    <location>
        <position position="334"/>
    </location>
    <ligand>
        <name>ATP</name>
        <dbReference type="ChEBI" id="CHEBI:30616"/>
    </ligand>
</feature>
<feature type="binding site" evidence="1">
    <location>
        <begin position="363"/>
        <end position="366"/>
    </location>
    <ligand>
        <name>ATP</name>
        <dbReference type="ChEBI" id="CHEBI:30616"/>
    </ligand>
</feature>
<feature type="helix" evidence="2">
    <location>
        <begin position="6"/>
        <end position="12"/>
    </location>
</feature>
<feature type="strand" evidence="2">
    <location>
        <begin position="18"/>
        <end position="23"/>
    </location>
</feature>
<feature type="strand" evidence="2">
    <location>
        <begin position="32"/>
        <end position="36"/>
    </location>
</feature>
<feature type="helix" evidence="2">
    <location>
        <begin position="42"/>
        <end position="56"/>
    </location>
</feature>
<feature type="strand" evidence="2">
    <location>
        <begin position="60"/>
        <end position="64"/>
    </location>
</feature>
<feature type="strand" evidence="2">
    <location>
        <begin position="71"/>
        <end position="73"/>
    </location>
</feature>
<feature type="helix" evidence="2">
    <location>
        <begin position="76"/>
        <end position="78"/>
    </location>
</feature>
<feature type="helix" evidence="2">
    <location>
        <begin position="81"/>
        <end position="91"/>
    </location>
</feature>
<feature type="strand" evidence="2">
    <location>
        <begin position="95"/>
        <end position="97"/>
    </location>
</feature>
<feature type="strand" evidence="2">
    <location>
        <begin position="99"/>
        <end position="103"/>
    </location>
</feature>
<feature type="helix" evidence="2">
    <location>
        <begin position="104"/>
        <end position="112"/>
    </location>
</feature>
<feature type="strand" evidence="2">
    <location>
        <begin position="118"/>
        <end position="120"/>
    </location>
</feature>
<feature type="helix" evidence="2">
    <location>
        <begin position="124"/>
        <end position="126"/>
    </location>
</feature>
<feature type="helix" evidence="2">
    <location>
        <begin position="128"/>
        <end position="131"/>
    </location>
</feature>
<feature type="helix" evidence="2">
    <location>
        <begin position="135"/>
        <end position="149"/>
    </location>
</feature>
<feature type="strand" evidence="2">
    <location>
        <begin position="154"/>
        <end position="158"/>
    </location>
</feature>
<feature type="helix" evidence="2">
    <location>
        <begin position="160"/>
        <end position="162"/>
    </location>
</feature>
<feature type="turn" evidence="2">
    <location>
        <begin position="168"/>
        <end position="171"/>
    </location>
</feature>
<feature type="helix" evidence="2">
    <location>
        <begin position="172"/>
        <end position="175"/>
    </location>
</feature>
<feature type="strand" evidence="2">
    <location>
        <begin position="179"/>
        <end position="181"/>
    </location>
</feature>
<feature type="helix" evidence="2">
    <location>
        <begin position="183"/>
        <end position="196"/>
    </location>
</feature>
<feature type="strand" evidence="2">
    <location>
        <begin position="201"/>
        <end position="207"/>
    </location>
</feature>
<feature type="helix" evidence="2">
    <location>
        <begin position="212"/>
        <end position="222"/>
    </location>
</feature>
<feature type="turn" evidence="2">
    <location>
        <begin position="223"/>
        <end position="225"/>
    </location>
</feature>
<feature type="strand" evidence="2">
    <location>
        <begin position="227"/>
        <end position="231"/>
    </location>
</feature>
<feature type="turn" evidence="2">
    <location>
        <begin position="233"/>
        <end position="235"/>
    </location>
</feature>
<feature type="helix" evidence="2">
    <location>
        <begin position="236"/>
        <end position="242"/>
    </location>
</feature>
<feature type="helix" evidence="2">
    <location>
        <begin position="254"/>
        <end position="256"/>
    </location>
</feature>
<feature type="helix" evidence="2">
    <location>
        <begin position="257"/>
        <end position="266"/>
    </location>
</feature>
<feature type="turn" evidence="2">
    <location>
        <begin position="267"/>
        <end position="270"/>
    </location>
</feature>
<feature type="strand" evidence="2">
    <location>
        <begin position="275"/>
        <end position="284"/>
    </location>
</feature>
<feature type="strand" evidence="2">
    <location>
        <begin position="289"/>
        <end position="293"/>
    </location>
</feature>
<feature type="strand" evidence="2">
    <location>
        <begin position="302"/>
        <end position="306"/>
    </location>
</feature>
<feature type="helix" evidence="2">
    <location>
        <begin position="308"/>
        <end position="320"/>
    </location>
</feature>
<feature type="strand" evidence="2">
    <location>
        <begin position="322"/>
        <end position="328"/>
    </location>
</feature>
<feature type="helix" evidence="2">
    <location>
        <begin position="336"/>
        <end position="338"/>
    </location>
</feature>
<feature type="helix" evidence="2">
    <location>
        <begin position="340"/>
        <end position="354"/>
    </location>
</feature>
<feature type="strand" evidence="2">
    <location>
        <begin position="358"/>
        <end position="362"/>
    </location>
</feature>
<feature type="helix" evidence="2">
    <location>
        <begin position="364"/>
        <end position="373"/>
    </location>
</feature>
<feature type="helix" evidence="2">
    <location>
        <begin position="377"/>
        <end position="379"/>
    </location>
</feature>
<feature type="strand" evidence="2">
    <location>
        <begin position="380"/>
        <end position="383"/>
    </location>
</feature>
<feature type="helix" evidence="2">
    <location>
        <begin position="388"/>
        <end position="394"/>
    </location>
</feature>
<feature type="helix" evidence="2">
    <location>
        <begin position="400"/>
        <end position="403"/>
    </location>
</feature>
<feature type="helix" evidence="2">
    <location>
        <begin position="404"/>
        <end position="406"/>
    </location>
</feature>
<name>PGK_MYCA1</name>
<protein>
    <recommendedName>
        <fullName evidence="1">Phosphoglycerate kinase</fullName>
        <ecNumber evidence="1">2.7.2.3</ecNumber>
    </recommendedName>
</protein>
<gene>
    <name evidence="1" type="primary">pgk</name>
    <name type="ordered locus">MAV_3340</name>
</gene>
<proteinExistence type="evidence at protein level"/>
<accession>A0QHY4</accession>
<reference key="1">
    <citation type="submission" date="2006-10" db="EMBL/GenBank/DDBJ databases">
        <authorList>
            <person name="Fleischmann R.D."/>
            <person name="Dodson R.J."/>
            <person name="Haft D.H."/>
            <person name="Merkel J.S."/>
            <person name="Nelson W.C."/>
            <person name="Fraser C.M."/>
        </authorList>
    </citation>
    <scope>NUCLEOTIDE SEQUENCE [LARGE SCALE GENOMIC DNA]</scope>
    <source>
        <strain>104</strain>
    </source>
</reference>
<organism>
    <name type="scientific">Mycobacterium avium (strain 104)</name>
    <dbReference type="NCBI Taxonomy" id="243243"/>
    <lineage>
        <taxon>Bacteria</taxon>
        <taxon>Bacillati</taxon>
        <taxon>Actinomycetota</taxon>
        <taxon>Actinomycetes</taxon>
        <taxon>Mycobacteriales</taxon>
        <taxon>Mycobacteriaceae</taxon>
        <taxon>Mycobacterium</taxon>
        <taxon>Mycobacterium avium complex (MAC)</taxon>
    </lineage>
</organism>
<comment type="catalytic activity">
    <reaction evidence="1">
        <text>(2R)-3-phosphoglycerate + ATP = (2R)-3-phospho-glyceroyl phosphate + ADP</text>
        <dbReference type="Rhea" id="RHEA:14801"/>
        <dbReference type="ChEBI" id="CHEBI:30616"/>
        <dbReference type="ChEBI" id="CHEBI:57604"/>
        <dbReference type="ChEBI" id="CHEBI:58272"/>
        <dbReference type="ChEBI" id="CHEBI:456216"/>
        <dbReference type="EC" id="2.7.2.3"/>
    </reaction>
</comment>
<comment type="pathway">
    <text evidence="1">Carbohydrate degradation; glycolysis; pyruvate from D-glyceraldehyde 3-phosphate: step 2/5.</text>
</comment>
<comment type="subunit">
    <text evidence="1">Monomer.</text>
</comment>
<comment type="subcellular location">
    <subcellularLocation>
        <location evidence="1">Cytoplasm</location>
    </subcellularLocation>
</comment>
<comment type="similarity">
    <text evidence="1">Belongs to the phosphoglycerate kinase family.</text>
</comment>
<evidence type="ECO:0000255" key="1">
    <source>
        <dbReference type="HAMAP-Rule" id="MF_00145"/>
    </source>
</evidence>
<evidence type="ECO:0007829" key="2">
    <source>
        <dbReference type="PDB" id="7LA1"/>
    </source>
</evidence>
<sequence>MAVHNLKDLLAEGVSGRGVLVRSDLNVPLDSDGEQGRITDPGRITASVPTLSALVEAGAKVVVAAHLGRPKNGPDPALSLAPVAAALGEQLGRHVQLASDVVGTDALARAEGLTDGDVLLLENIRFDARETSKDDAERLALARQLAELVGPTGAFVSDGFGVVHRKQASVYDVATLLPHYAGTLVAEEIAVLEQLTGSTKRPYAVVLGGSKVSDKLGVIESLATKADSIVIGGGMCFTFLAAQGFSVGKSLLETEMVDTCRRLLDTYVDVLRLPVDIVAADRFAADAAPQTVPADAIPDDLMGLDIGPGSVKRFTALLSNAETIFWNGPMGVFEFPAFAAGTKGLAEAIAAATGKGAFSVVGGGDSAAAVRALGIPESGFSHISTGGGASLEYLEGKALPGIEVLGRPQPTGGAA</sequence>
<keyword id="KW-0002">3D-structure</keyword>
<keyword id="KW-0067">ATP-binding</keyword>
<keyword id="KW-0963">Cytoplasm</keyword>
<keyword id="KW-0324">Glycolysis</keyword>
<keyword id="KW-0418">Kinase</keyword>
<keyword id="KW-0547">Nucleotide-binding</keyword>
<keyword id="KW-0808">Transferase</keyword>